<proteinExistence type="inferred from homology"/>
<evidence type="ECO:0000255" key="1">
    <source>
        <dbReference type="HAMAP-Rule" id="MF_00044"/>
    </source>
</evidence>
<organism>
    <name type="scientific">Salmonella enteritidis PT4 (strain P125109)</name>
    <dbReference type="NCBI Taxonomy" id="550537"/>
    <lineage>
        <taxon>Bacteria</taxon>
        <taxon>Pseudomonadati</taxon>
        <taxon>Pseudomonadota</taxon>
        <taxon>Gammaproteobacteria</taxon>
        <taxon>Enterobacterales</taxon>
        <taxon>Enterobacteriaceae</taxon>
        <taxon>Salmonella</taxon>
    </lineage>
</organism>
<protein>
    <recommendedName>
        <fullName evidence="1">Aspartate--tRNA ligase</fullName>
        <ecNumber evidence="1">6.1.1.12</ecNumber>
    </recommendedName>
    <alternativeName>
        <fullName evidence="1">Aspartyl-tRNA synthetase</fullName>
        <shortName evidence="1">AspRS</shortName>
    </alternativeName>
</protein>
<feature type="chain" id="PRO_1000091037" description="Aspartate--tRNA ligase">
    <location>
        <begin position="1"/>
        <end position="590"/>
    </location>
</feature>
<feature type="region of interest" description="Aspartate" evidence="1">
    <location>
        <begin position="195"/>
        <end position="198"/>
    </location>
</feature>
<feature type="binding site" evidence="1">
    <location>
        <position position="171"/>
    </location>
    <ligand>
        <name>L-aspartate</name>
        <dbReference type="ChEBI" id="CHEBI:29991"/>
    </ligand>
</feature>
<feature type="binding site" evidence="1">
    <location>
        <begin position="217"/>
        <end position="219"/>
    </location>
    <ligand>
        <name>ATP</name>
        <dbReference type="ChEBI" id="CHEBI:30616"/>
    </ligand>
</feature>
<feature type="binding site" evidence="1">
    <location>
        <position position="217"/>
    </location>
    <ligand>
        <name>L-aspartate</name>
        <dbReference type="ChEBI" id="CHEBI:29991"/>
    </ligand>
</feature>
<feature type="binding site" evidence="1">
    <location>
        <position position="226"/>
    </location>
    <ligand>
        <name>ATP</name>
        <dbReference type="ChEBI" id="CHEBI:30616"/>
    </ligand>
</feature>
<feature type="binding site" evidence="1">
    <location>
        <position position="448"/>
    </location>
    <ligand>
        <name>L-aspartate</name>
        <dbReference type="ChEBI" id="CHEBI:29991"/>
    </ligand>
</feature>
<feature type="binding site" evidence="1">
    <location>
        <position position="482"/>
    </location>
    <ligand>
        <name>ATP</name>
        <dbReference type="ChEBI" id="CHEBI:30616"/>
    </ligand>
</feature>
<feature type="binding site" evidence="1">
    <location>
        <position position="489"/>
    </location>
    <ligand>
        <name>L-aspartate</name>
        <dbReference type="ChEBI" id="CHEBI:29991"/>
    </ligand>
</feature>
<feature type="binding site" evidence="1">
    <location>
        <begin position="534"/>
        <end position="537"/>
    </location>
    <ligand>
        <name>ATP</name>
        <dbReference type="ChEBI" id="CHEBI:30616"/>
    </ligand>
</feature>
<accession>B5R1V2</accession>
<gene>
    <name evidence="1" type="primary">aspS</name>
    <name type="ordered locus">SEN1102</name>
</gene>
<dbReference type="EC" id="6.1.1.12" evidence="1"/>
<dbReference type="EMBL" id="AM933172">
    <property type="protein sequence ID" value="CAR32685.1"/>
    <property type="molecule type" value="Genomic_DNA"/>
</dbReference>
<dbReference type="RefSeq" id="WP_001258629.1">
    <property type="nucleotide sequence ID" value="NC_011294.1"/>
</dbReference>
<dbReference type="SMR" id="B5R1V2"/>
<dbReference type="KEGG" id="set:SEN1102"/>
<dbReference type="HOGENOM" id="CLU_014330_3_2_6"/>
<dbReference type="Proteomes" id="UP000000613">
    <property type="component" value="Chromosome"/>
</dbReference>
<dbReference type="GO" id="GO:0005737">
    <property type="term" value="C:cytoplasm"/>
    <property type="evidence" value="ECO:0007669"/>
    <property type="project" value="UniProtKB-SubCell"/>
</dbReference>
<dbReference type="GO" id="GO:0004815">
    <property type="term" value="F:aspartate-tRNA ligase activity"/>
    <property type="evidence" value="ECO:0007669"/>
    <property type="project" value="UniProtKB-UniRule"/>
</dbReference>
<dbReference type="GO" id="GO:0005524">
    <property type="term" value="F:ATP binding"/>
    <property type="evidence" value="ECO:0007669"/>
    <property type="project" value="UniProtKB-UniRule"/>
</dbReference>
<dbReference type="GO" id="GO:0003676">
    <property type="term" value="F:nucleic acid binding"/>
    <property type="evidence" value="ECO:0007669"/>
    <property type="project" value="InterPro"/>
</dbReference>
<dbReference type="GO" id="GO:0006422">
    <property type="term" value="P:aspartyl-tRNA aminoacylation"/>
    <property type="evidence" value="ECO:0007669"/>
    <property type="project" value="UniProtKB-UniRule"/>
</dbReference>
<dbReference type="CDD" id="cd00777">
    <property type="entry name" value="AspRS_core"/>
    <property type="match status" value="1"/>
</dbReference>
<dbReference type="CDD" id="cd04317">
    <property type="entry name" value="EcAspRS_like_N"/>
    <property type="match status" value="1"/>
</dbReference>
<dbReference type="FunFam" id="2.40.50.140:FF:000080">
    <property type="entry name" value="Aspartate--tRNA ligase"/>
    <property type="match status" value="1"/>
</dbReference>
<dbReference type="FunFam" id="3.30.1360.30:FF:000001">
    <property type="entry name" value="Aspartate--tRNA ligase"/>
    <property type="match status" value="1"/>
</dbReference>
<dbReference type="Gene3D" id="3.30.930.10">
    <property type="entry name" value="Bira Bifunctional Protein, Domain 2"/>
    <property type="match status" value="1"/>
</dbReference>
<dbReference type="Gene3D" id="3.30.1360.30">
    <property type="entry name" value="GAD-like domain"/>
    <property type="match status" value="1"/>
</dbReference>
<dbReference type="Gene3D" id="2.40.50.140">
    <property type="entry name" value="Nucleic acid-binding proteins"/>
    <property type="match status" value="1"/>
</dbReference>
<dbReference type="HAMAP" id="MF_00044">
    <property type="entry name" value="Asp_tRNA_synth_type1"/>
    <property type="match status" value="1"/>
</dbReference>
<dbReference type="InterPro" id="IPR004364">
    <property type="entry name" value="Aa-tRNA-synt_II"/>
</dbReference>
<dbReference type="InterPro" id="IPR006195">
    <property type="entry name" value="aa-tRNA-synth_II"/>
</dbReference>
<dbReference type="InterPro" id="IPR045864">
    <property type="entry name" value="aa-tRNA-synth_II/BPL/LPL"/>
</dbReference>
<dbReference type="InterPro" id="IPR004524">
    <property type="entry name" value="Asp-tRNA-ligase_1"/>
</dbReference>
<dbReference type="InterPro" id="IPR047089">
    <property type="entry name" value="Asp-tRNA-ligase_1_N"/>
</dbReference>
<dbReference type="InterPro" id="IPR002312">
    <property type="entry name" value="Asp/Asn-tRNA-synth_IIb"/>
</dbReference>
<dbReference type="InterPro" id="IPR047090">
    <property type="entry name" value="AspRS_core"/>
</dbReference>
<dbReference type="InterPro" id="IPR004115">
    <property type="entry name" value="GAD-like_sf"/>
</dbReference>
<dbReference type="InterPro" id="IPR029351">
    <property type="entry name" value="GAD_dom"/>
</dbReference>
<dbReference type="InterPro" id="IPR012340">
    <property type="entry name" value="NA-bd_OB-fold"/>
</dbReference>
<dbReference type="InterPro" id="IPR004365">
    <property type="entry name" value="NA-bd_OB_tRNA"/>
</dbReference>
<dbReference type="NCBIfam" id="TIGR00459">
    <property type="entry name" value="aspS_bact"/>
    <property type="match status" value="1"/>
</dbReference>
<dbReference type="NCBIfam" id="NF001750">
    <property type="entry name" value="PRK00476.1"/>
    <property type="match status" value="1"/>
</dbReference>
<dbReference type="PANTHER" id="PTHR22594:SF5">
    <property type="entry name" value="ASPARTATE--TRNA LIGASE, MITOCHONDRIAL"/>
    <property type="match status" value="1"/>
</dbReference>
<dbReference type="PANTHER" id="PTHR22594">
    <property type="entry name" value="ASPARTYL/LYSYL-TRNA SYNTHETASE"/>
    <property type="match status" value="1"/>
</dbReference>
<dbReference type="Pfam" id="PF02938">
    <property type="entry name" value="GAD"/>
    <property type="match status" value="1"/>
</dbReference>
<dbReference type="Pfam" id="PF00152">
    <property type="entry name" value="tRNA-synt_2"/>
    <property type="match status" value="1"/>
</dbReference>
<dbReference type="Pfam" id="PF01336">
    <property type="entry name" value="tRNA_anti-codon"/>
    <property type="match status" value="1"/>
</dbReference>
<dbReference type="PRINTS" id="PR01042">
    <property type="entry name" value="TRNASYNTHASP"/>
</dbReference>
<dbReference type="SUPFAM" id="SSF55681">
    <property type="entry name" value="Class II aaRS and biotin synthetases"/>
    <property type="match status" value="1"/>
</dbReference>
<dbReference type="SUPFAM" id="SSF55261">
    <property type="entry name" value="GAD domain-like"/>
    <property type="match status" value="1"/>
</dbReference>
<dbReference type="SUPFAM" id="SSF50249">
    <property type="entry name" value="Nucleic acid-binding proteins"/>
    <property type="match status" value="1"/>
</dbReference>
<dbReference type="PROSITE" id="PS50862">
    <property type="entry name" value="AA_TRNA_LIGASE_II"/>
    <property type="match status" value="1"/>
</dbReference>
<keyword id="KW-0030">Aminoacyl-tRNA synthetase</keyword>
<keyword id="KW-0067">ATP-binding</keyword>
<keyword id="KW-0963">Cytoplasm</keyword>
<keyword id="KW-0436">Ligase</keyword>
<keyword id="KW-0547">Nucleotide-binding</keyword>
<keyword id="KW-0648">Protein biosynthesis</keyword>
<comment type="function">
    <text evidence="1">Catalyzes the attachment of L-aspartate to tRNA(Asp) in a two-step reaction: L-aspartate is first activated by ATP to form Asp-AMP and then transferred to the acceptor end of tRNA(Asp).</text>
</comment>
<comment type="catalytic activity">
    <reaction evidence="1">
        <text>tRNA(Asp) + L-aspartate + ATP = L-aspartyl-tRNA(Asp) + AMP + diphosphate</text>
        <dbReference type="Rhea" id="RHEA:19649"/>
        <dbReference type="Rhea" id="RHEA-COMP:9660"/>
        <dbReference type="Rhea" id="RHEA-COMP:9678"/>
        <dbReference type="ChEBI" id="CHEBI:29991"/>
        <dbReference type="ChEBI" id="CHEBI:30616"/>
        <dbReference type="ChEBI" id="CHEBI:33019"/>
        <dbReference type="ChEBI" id="CHEBI:78442"/>
        <dbReference type="ChEBI" id="CHEBI:78516"/>
        <dbReference type="ChEBI" id="CHEBI:456215"/>
        <dbReference type="EC" id="6.1.1.12"/>
    </reaction>
</comment>
<comment type="subunit">
    <text evidence="1">Homodimer.</text>
</comment>
<comment type="subcellular location">
    <subcellularLocation>
        <location evidence="1">Cytoplasm</location>
    </subcellularLocation>
</comment>
<comment type="similarity">
    <text evidence="1">Belongs to the class-II aminoacyl-tRNA synthetase family. Type 1 subfamily.</text>
</comment>
<sequence length="590" mass="65753">MRTEYCGQLRLSHVGQQVTLCGWVNRRRDLGSLIFIDMRDREGIVQVFFDPDRADALKLASELRNEFCIQVTGTVRARDAKNVNADMATGEIEVLASSLTIINRADSLPLDANHVNTEEARLKYRYLDLRRPEMAQRLKTRAKITSLVRRFMDDHGFLDIETPMLTKATPEGARDYLVPSRVHKGKFYALPQSPQLFKQLLMMSGFDRYYQIVKCFRDEDLRADRQPEFTQIDVETSFMTAPQVREVMEALVRHLWLEVKGVDLGDFPVMTFAEAERRYGSDKPDLRNPMELVDVADLLKSVEFAVFAGPANDPKGRVAALRVPGGAQLSRKQIDDYGNFVKIYGAKGLAYIKVNERAKGLDGINSPVAKFLTADIVDAILERTGAQDGDMIFFGADNKKVVADALGALRLKLGKDLSLTDEDKWAPLWVIDFPMFEDDGEGGLTAMHHPFTAPRDMTASELKTAPEEAVANAYDMVINGYEVGGGSVRIHNGEMQQTVFGILGINEQEQREKFGFLLDALKYGTPPHAGLAFGLDRLTMLLTGTDNIRDVIAFPKTTAAACLMTEAPSFANQAALTELGIQVVKKAENN</sequence>
<reference key="1">
    <citation type="journal article" date="2008" name="Genome Res.">
        <title>Comparative genome analysis of Salmonella enteritidis PT4 and Salmonella gallinarum 287/91 provides insights into evolutionary and host adaptation pathways.</title>
        <authorList>
            <person name="Thomson N.R."/>
            <person name="Clayton D.J."/>
            <person name="Windhorst D."/>
            <person name="Vernikos G."/>
            <person name="Davidson S."/>
            <person name="Churcher C."/>
            <person name="Quail M.A."/>
            <person name="Stevens M."/>
            <person name="Jones M.A."/>
            <person name="Watson M."/>
            <person name="Barron A."/>
            <person name="Layton A."/>
            <person name="Pickard D."/>
            <person name="Kingsley R.A."/>
            <person name="Bignell A."/>
            <person name="Clark L."/>
            <person name="Harris B."/>
            <person name="Ormond D."/>
            <person name="Abdellah Z."/>
            <person name="Brooks K."/>
            <person name="Cherevach I."/>
            <person name="Chillingworth T."/>
            <person name="Woodward J."/>
            <person name="Norberczak H."/>
            <person name="Lord A."/>
            <person name="Arrowsmith C."/>
            <person name="Jagels K."/>
            <person name="Moule S."/>
            <person name="Mungall K."/>
            <person name="Saunders M."/>
            <person name="Whitehead S."/>
            <person name="Chabalgoity J.A."/>
            <person name="Maskell D."/>
            <person name="Humphreys T."/>
            <person name="Roberts M."/>
            <person name="Barrow P.A."/>
            <person name="Dougan G."/>
            <person name="Parkhill J."/>
        </authorList>
    </citation>
    <scope>NUCLEOTIDE SEQUENCE [LARGE SCALE GENOMIC DNA]</scope>
    <source>
        <strain>P125109</strain>
    </source>
</reference>
<name>SYD_SALEP</name>